<feature type="chain" id="PRO_0000303231" description="G-protein coupled receptor 183">
    <location>
        <begin position="1"/>
        <end position="357"/>
    </location>
</feature>
<feature type="topological domain" description="Extracellular" evidence="3">
    <location>
        <begin position="1"/>
        <end position="27"/>
    </location>
</feature>
<feature type="transmembrane region" description="Helical; Name=1" evidence="3">
    <location>
        <begin position="28"/>
        <end position="53"/>
    </location>
</feature>
<feature type="topological domain" description="Cytoplasmic" evidence="3">
    <location>
        <begin position="54"/>
        <end position="73"/>
    </location>
</feature>
<feature type="transmembrane region" description="Helical; Name=2" evidence="3">
    <location>
        <begin position="74"/>
        <end position="91"/>
    </location>
</feature>
<feature type="topological domain" description="Extracellular" evidence="3">
    <location>
        <begin position="92"/>
        <end position="101"/>
    </location>
</feature>
<feature type="transmembrane region" description="Helical; Name=3" evidence="3">
    <location>
        <begin position="102"/>
        <end position="123"/>
    </location>
</feature>
<feature type="topological domain" description="Cytoplasmic" evidence="3">
    <location>
        <begin position="124"/>
        <end position="145"/>
    </location>
</feature>
<feature type="transmembrane region" description="Helical; Name=4" evidence="3">
    <location>
        <begin position="146"/>
        <end position="164"/>
    </location>
</feature>
<feature type="topological domain" description="Extracellular" evidence="3">
    <location>
        <begin position="165"/>
        <end position="188"/>
    </location>
</feature>
<feature type="transmembrane region" description="Helical; Name=5" evidence="3">
    <location>
        <begin position="189"/>
        <end position="211"/>
    </location>
</feature>
<feature type="topological domain" description="Cytoplasmic" evidence="3">
    <location>
        <begin position="212"/>
        <end position="237"/>
    </location>
</feature>
<feature type="transmembrane region" description="Helical; Name=6" evidence="3">
    <location>
        <begin position="238"/>
        <end position="261"/>
    </location>
</feature>
<feature type="topological domain" description="Extracellular" evidence="3">
    <location>
        <begin position="262"/>
        <end position="283"/>
    </location>
</feature>
<feature type="transmembrane region" description="Helical; Name=7" evidence="3">
    <location>
        <begin position="284"/>
        <end position="308"/>
    </location>
</feature>
<feature type="topological domain" description="Cytoplasmic" evidence="3">
    <location>
        <begin position="309"/>
        <end position="357"/>
    </location>
</feature>
<feature type="region of interest" description="Interaction with G proteins" evidence="1">
    <location>
        <begin position="122"/>
        <end position="130"/>
    </location>
</feature>
<feature type="region of interest" description="Disordered" evidence="5">
    <location>
        <begin position="336"/>
        <end position="357"/>
    </location>
</feature>
<feature type="compositionally biased region" description="Polar residues" evidence="5">
    <location>
        <begin position="344"/>
        <end position="357"/>
    </location>
</feature>
<feature type="binding site" evidence="2">
    <location>
        <position position="83"/>
    </location>
    <ligand>
        <name>7alpha,25-dihydroxycholesterol</name>
        <dbReference type="ChEBI" id="CHEBI:37623"/>
        <note>agonist</note>
    </ligand>
</feature>
<feature type="binding site" evidence="2">
    <location>
        <position position="108"/>
    </location>
    <ligand>
        <name>7alpha,25-dihydroxycholesterol</name>
        <dbReference type="ChEBI" id="CHEBI:37623"/>
        <note>agonist</note>
    </ligand>
</feature>
<feature type="binding site" evidence="2">
    <location>
        <position position="112"/>
    </location>
    <ligand>
        <name>7alpha,25-dihydroxycholesterol</name>
        <dbReference type="ChEBI" id="CHEBI:37623"/>
        <note>agonist</note>
    </ligand>
</feature>
<feature type="binding site" evidence="2">
    <location>
        <position position="256"/>
    </location>
    <ligand>
        <name>7alpha,25-dihydroxycholesterol</name>
        <dbReference type="ChEBI" id="CHEBI:37623"/>
        <note>agonist</note>
    </ligand>
</feature>
<feature type="modified residue" description="Phosphoserine" evidence="23">
    <location>
        <position position="324"/>
    </location>
</feature>
<feature type="modified residue" description="Phosphoserine" evidence="23">
    <location>
        <position position="345"/>
    </location>
</feature>
<feature type="glycosylation site" description="N-linked (GlcNAc...) asparagine" evidence="3">
    <location>
        <position position="4"/>
    </location>
</feature>
<feature type="disulfide bond" evidence="4">
    <location>
        <begin position="100"/>
        <end position="177"/>
    </location>
</feature>
<feature type="sequence conflict" description="In Ref. 2; AAH52868." evidence="20" ref="2">
    <original>L</original>
    <variation>F</variation>
    <location>
        <position position="163"/>
    </location>
</feature>
<feature type="sequence conflict" description="In Ref. 1; BAE33542." evidence="20" ref="1">
    <original>L</original>
    <variation>P</variation>
    <location>
        <position position="239"/>
    </location>
</feature>
<feature type="sequence conflict" description="In Ref. 2; AAH52868." evidence="20" ref="2">
    <original>N</original>
    <variation>S</variation>
    <location>
        <position position="338"/>
    </location>
</feature>
<sequence length="357" mass="40185">MANNFTTPLATSHGNNCDLYAHHSTARVLMPLHYSLVFIIGLVGNLLALVVIVQNRKKINSTTLYSMNLVISDILFTTALPTRIAYYALGFDWRIGDALCRVTALVFYINTYAGVNFMTCLSIDRFFAVVHPLRYNKIKRIEYAKGVCLSVWILVFAQTLPLLLTPMSKEEGDKTTCMEYPNFEGTASLPWILLGACLLGYVLPITVILLCYSQICCKLFRTAKQNPLTEKSGVNKKALNTIILIIVVFILCFTPYHVAIIQHMIKMLCSPGALECGARHSFQISLHFTVCLMNFNCCMDPFIYFFACKGYKRKVMKMLKRQVSVSISSAVRSAPEENSREMTESQMMIHSKASNGR</sequence>
<gene>
    <name evidence="22" type="primary">Gpr183</name>
    <name evidence="2" type="synonym">Ebi2</name>
</gene>
<evidence type="ECO:0000250" key="1"/>
<evidence type="ECO:0000250" key="2">
    <source>
        <dbReference type="UniProtKB" id="P32249"/>
    </source>
</evidence>
<evidence type="ECO:0000255" key="3"/>
<evidence type="ECO:0000255" key="4">
    <source>
        <dbReference type="PROSITE-ProRule" id="PRU00521"/>
    </source>
</evidence>
<evidence type="ECO:0000256" key="5">
    <source>
        <dbReference type="SAM" id="MobiDB-lite"/>
    </source>
</evidence>
<evidence type="ECO:0000269" key="6">
    <source>
    </source>
</evidence>
<evidence type="ECO:0000269" key="7">
    <source>
    </source>
</evidence>
<evidence type="ECO:0000269" key="8">
    <source>
    </source>
</evidence>
<evidence type="ECO:0000269" key="9">
    <source>
    </source>
</evidence>
<evidence type="ECO:0000269" key="10">
    <source>
    </source>
</evidence>
<evidence type="ECO:0000269" key="11">
    <source>
    </source>
</evidence>
<evidence type="ECO:0000269" key="12">
    <source>
    </source>
</evidence>
<evidence type="ECO:0000269" key="13">
    <source>
    </source>
</evidence>
<evidence type="ECO:0000269" key="14">
    <source>
    </source>
</evidence>
<evidence type="ECO:0000269" key="15">
    <source>
    </source>
</evidence>
<evidence type="ECO:0000269" key="16">
    <source>
    </source>
</evidence>
<evidence type="ECO:0000269" key="17">
    <source>
    </source>
</evidence>
<evidence type="ECO:0000269" key="18">
    <source>
    </source>
</evidence>
<evidence type="ECO:0000269" key="19">
    <source>
    </source>
</evidence>
<evidence type="ECO:0000305" key="20"/>
<evidence type="ECO:0000305" key="21">
    <source>
    </source>
</evidence>
<evidence type="ECO:0000312" key="22">
    <source>
        <dbReference type="MGI" id="MGI:2442034"/>
    </source>
</evidence>
<evidence type="ECO:0007744" key="23">
    <source>
    </source>
</evidence>
<keyword id="KW-1064">Adaptive immunity</keyword>
<keyword id="KW-1003">Cell membrane</keyword>
<keyword id="KW-1015">Disulfide bond</keyword>
<keyword id="KW-0297">G-protein coupled receptor</keyword>
<keyword id="KW-0325">Glycoprotein</keyword>
<keyword id="KW-0391">Immunity</keyword>
<keyword id="KW-0472">Membrane</keyword>
<keyword id="KW-0597">Phosphoprotein</keyword>
<keyword id="KW-0675">Receptor</keyword>
<keyword id="KW-1185">Reference proteome</keyword>
<keyword id="KW-0807">Transducer</keyword>
<keyword id="KW-0812">Transmembrane</keyword>
<keyword id="KW-1133">Transmembrane helix</keyword>
<reference key="1">
    <citation type="journal article" date="2005" name="Science">
        <title>The transcriptional landscape of the mammalian genome.</title>
        <authorList>
            <person name="Carninci P."/>
            <person name="Kasukawa T."/>
            <person name="Katayama S."/>
            <person name="Gough J."/>
            <person name="Frith M.C."/>
            <person name="Maeda N."/>
            <person name="Oyama R."/>
            <person name="Ravasi T."/>
            <person name="Lenhard B."/>
            <person name="Wells C."/>
            <person name="Kodzius R."/>
            <person name="Shimokawa K."/>
            <person name="Bajic V.B."/>
            <person name="Brenner S.E."/>
            <person name="Batalov S."/>
            <person name="Forrest A.R."/>
            <person name="Zavolan M."/>
            <person name="Davis M.J."/>
            <person name="Wilming L.G."/>
            <person name="Aidinis V."/>
            <person name="Allen J.E."/>
            <person name="Ambesi-Impiombato A."/>
            <person name="Apweiler R."/>
            <person name="Aturaliya R.N."/>
            <person name="Bailey T.L."/>
            <person name="Bansal M."/>
            <person name="Baxter L."/>
            <person name="Beisel K.W."/>
            <person name="Bersano T."/>
            <person name="Bono H."/>
            <person name="Chalk A.M."/>
            <person name="Chiu K.P."/>
            <person name="Choudhary V."/>
            <person name="Christoffels A."/>
            <person name="Clutterbuck D.R."/>
            <person name="Crowe M.L."/>
            <person name="Dalla E."/>
            <person name="Dalrymple B.P."/>
            <person name="de Bono B."/>
            <person name="Della Gatta G."/>
            <person name="di Bernardo D."/>
            <person name="Down T."/>
            <person name="Engstrom P."/>
            <person name="Fagiolini M."/>
            <person name="Faulkner G."/>
            <person name="Fletcher C.F."/>
            <person name="Fukushima T."/>
            <person name="Furuno M."/>
            <person name="Futaki S."/>
            <person name="Gariboldi M."/>
            <person name="Georgii-Hemming P."/>
            <person name="Gingeras T.R."/>
            <person name="Gojobori T."/>
            <person name="Green R.E."/>
            <person name="Gustincich S."/>
            <person name="Harbers M."/>
            <person name="Hayashi Y."/>
            <person name="Hensch T.K."/>
            <person name="Hirokawa N."/>
            <person name="Hill D."/>
            <person name="Huminiecki L."/>
            <person name="Iacono M."/>
            <person name="Ikeo K."/>
            <person name="Iwama A."/>
            <person name="Ishikawa T."/>
            <person name="Jakt M."/>
            <person name="Kanapin A."/>
            <person name="Katoh M."/>
            <person name="Kawasawa Y."/>
            <person name="Kelso J."/>
            <person name="Kitamura H."/>
            <person name="Kitano H."/>
            <person name="Kollias G."/>
            <person name="Krishnan S.P."/>
            <person name="Kruger A."/>
            <person name="Kummerfeld S.K."/>
            <person name="Kurochkin I.V."/>
            <person name="Lareau L.F."/>
            <person name="Lazarevic D."/>
            <person name="Lipovich L."/>
            <person name="Liu J."/>
            <person name="Liuni S."/>
            <person name="McWilliam S."/>
            <person name="Madan Babu M."/>
            <person name="Madera M."/>
            <person name="Marchionni L."/>
            <person name="Matsuda H."/>
            <person name="Matsuzawa S."/>
            <person name="Miki H."/>
            <person name="Mignone F."/>
            <person name="Miyake S."/>
            <person name="Morris K."/>
            <person name="Mottagui-Tabar S."/>
            <person name="Mulder N."/>
            <person name="Nakano N."/>
            <person name="Nakauchi H."/>
            <person name="Ng P."/>
            <person name="Nilsson R."/>
            <person name="Nishiguchi S."/>
            <person name="Nishikawa S."/>
            <person name="Nori F."/>
            <person name="Ohara O."/>
            <person name="Okazaki Y."/>
            <person name="Orlando V."/>
            <person name="Pang K.C."/>
            <person name="Pavan W.J."/>
            <person name="Pavesi G."/>
            <person name="Pesole G."/>
            <person name="Petrovsky N."/>
            <person name="Piazza S."/>
            <person name="Reed J."/>
            <person name="Reid J.F."/>
            <person name="Ring B.Z."/>
            <person name="Ringwald M."/>
            <person name="Rost B."/>
            <person name="Ruan Y."/>
            <person name="Salzberg S.L."/>
            <person name="Sandelin A."/>
            <person name="Schneider C."/>
            <person name="Schoenbach C."/>
            <person name="Sekiguchi K."/>
            <person name="Semple C.A."/>
            <person name="Seno S."/>
            <person name="Sessa L."/>
            <person name="Sheng Y."/>
            <person name="Shibata Y."/>
            <person name="Shimada H."/>
            <person name="Shimada K."/>
            <person name="Silva D."/>
            <person name="Sinclair B."/>
            <person name="Sperling S."/>
            <person name="Stupka E."/>
            <person name="Sugiura K."/>
            <person name="Sultana R."/>
            <person name="Takenaka Y."/>
            <person name="Taki K."/>
            <person name="Tammoja K."/>
            <person name="Tan S.L."/>
            <person name="Tang S."/>
            <person name="Taylor M.S."/>
            <person name="Tegner J."/>
            <person name="Teichmann S.A."/>
            <person name="Ueda H.R."/>
            <person name="van Nimwegen E."/>
            <person name="Verardo R."/>
            <person name="Wei C.L."/>
            <person name="Yagi K."/>
            <person name="Yamanishi H."/>
            <person name="Zabarovsky E."/>
            <person name="Zhu S."/>
            <person name="Zimmer A."/>
            <person name="Hide W."/>
            <person name="Bult C."/>
            <person name="Grimmond S.M."/>
            <person name="Teasdale R.D."/>
            <person name="Liu E.T."/>
            <person name="Brusic V."/>
            <person name="Quackenbush J."/>
            <person name="Wahlestedt C."/>
            <person name="Mattick J.S."/>
            <person name="Hume D.A."/>
            <person name="Kai C."/>
            <person name="Sasaki D."/>
            <person name="Tomaru Y."/>
            <person name="Fukuda S."/>
            <person name="Kanamori-Katayama M."/>
            <person name="Suzuki M."/>
            <person name="Aoki J."/>
            <person name="Arakawa T."/>
            <person name="Iida J."/>
            <person name="Imamura K."/>
            <person name="Itoh M."/>
            <person name="Kato T."/>
            <person name="Kawaji H."/>
            <person name="Kawagashira N."/>
            <person name="Kawashima T."/>
            <person name="Kojima M."/>
            <person name="Kondo S."/>
            <person name="Konno H."/>
            <person name="Nakano K."/>
            <person name="Ninomiya N."/>
            <person name="Nishio T."/>
            <person name="Okada M."/>
            <person name="Plessy C."/>
            <person name="Shibata K."/>
            <person name="Shiraki T."/>
            <person name="Suzuki S."/>
            <person name="Tagami M."/>
            <person name="Waki K."/>
            <person name="Watahiki A."/>
            <person name="Okamura-Oho Y."/>
            <person name="Suzuki H."/>
            <person name="Kawai J."/>
            <person name="Hayashizaki Y."/>
        </authorList>
    </citation>
    <scope>NUCLEOTIDE SEQUENCE [LARGE SCALE MRNA]</scope>
    <source>
        <strain>C57BL/6J</strain>
        <strain>NOD</strain>
        <tissue>Bone marrow</tissue>
        <tissue>Spleen</tissue>
        <tissue>Thymus</tissue>
    </source>
</reference>
<reference key="2">
    <citation type="journal article" date="2004" name="Genome Res.">
        <title>The status, quality, and expansion of the NIH full-length cDNA project: the Mammalian Gene Collection (MGC).</title>
        <authorList>
            <consortium name="The MGC Project Team"/>
        </authorList>
    </citation>
    <scope>NUCLEOTIDE SEQUENCE [LARGE SCALE MRNA]</scope>
    <source>
        <strain>C57BL/6NCr</strain>
        <tissue>Hematopoietic stem cell</tissue>
    </source>
</reference>
<reference key="3">
    <citation type="journal article" date="2003" name="Proc. Natl. Acad. Sci. U.S.A.">
        <title>The G protein-coupled receptor repertoires of human and mouse.</title>
        <authorList>
            <person name="Vassilatis D.K."/>
            <person name="Hohmann J.G."/>
            <person name="Zeng H."/>
            <person name="Li F."/>
            <person name="Ranchalis J.E."/>
            <person name="Mortrud M.T."/>
            <person name="Brown A."/>
            <person name="Rodriguez S.S."/>
            <person name="Weller J.R."/>
            <person name="Wright A.C."/>
            <person name="Bergmann J.E."/>
            <person name="Gaitanaris G.A."/>
        </authorList>
    </citation>
    <scope>NUCLEOTIDE SEQUENCE [LARGE SCALE MRNA] OF 250-354</scope>
</reference>
<reference key="4">
    <citation type="journal article" date="2009" name="Immunity">
        <title>The phagosomal proteome in interferon-gamma-activated macrophages.</title>
        <authorList>
            <person name="Trost M."/>
            <person name="English L."/>
            <person name="Lemieux S."/>
            <person name="Courcelles M."/>
            <person name="Desjardins M."/>
            <person name="Thibault P."/>
        </authorList>
    </citation>
    <scope>PHOSPHORYLATION [LARGE SCALE ANALYSIS] AT SER-324 AND SER-345</scope>
    <scope>IDENTIFICATION BY MASS SPECTROMETRY [LARGE SCALE ANALYSIS]</scope>
</reference>
<reference key="5">
    <citation type="journal article" date="2009" name="Immunity">
        <title>Guidance of B cells by the orphan G protein-coupled receptor EBI2 shapes humoral immune responses.</title>
        <authorList>
            <person name="Gatto D."/>
            <person name="Paus D."/>
            <person name="Basten A."/>
            <person name="Mackay C.R."/>
            <person name="Brink R."/>
        </authorList>
    </citation>
    <scope>FUNCTION</scope>
    <scope>DISRUPTION PHENOTYPE</scope>
</reference>
<reference key="6">
    <citation type="journal article" date="2009" name="Nature">
        <title>EBI2 mediates B cell segregation between the outer and centre follicle.</title>
        <authorList>
            <person name="Pereira J.P."/>
            <person name="Kelly L.M."/>
            <person name="Xu Y."/>
            <person name="Cyster J.G."/>
        </authorList>
    </citation>
    <scope>FUNCTION</scope>
    <scope>TISSUE SPECIFICITY</scope>
    <scope>INDUCTION</scope>
    <scope>DISRUPTION PHENOTYPE</scope>
</reference>
<reference key="7">
    <citation type="journal article" date="2011" name="J. Biol. Chem.">
        <title>Ligand modulation of the Epstein-Barr virus-induced seven-transmembrane receptor EBI2: identification of a potent and efficacious inverse agonist.</title>
        <authorList>
            <person name="Benned-Jensen T."/>
            <person name="Smethurst C."/>
            <person name="Holst P.J."/>
            <person name="Page K.R."/>
            <person name="Sauls H."/>
            <person name="Sivertsen B."/>
            <person name="Schwartz T.W."/>
            <person name="Blanchard A."/>
            <person name="Jepras R."/>
            <person name="Rosenkilde M.M."/>
        </authorList>
    </citation>
    <scope>ACTIVITY REGULATION</scope>
</reference>
<reference key="8">
    <citation type="journal article" date="2011" name="J. Immunol.">
        <title>EBI2 guides serial movements of activated B cells and ligand activity is detectable in lymphoid and nonlymphoid tissues.</title>
        <authorList>
            <person name="Kelly L.M."/>
            <person name="Pereira J.P."/>
            <person name="Yi T."/>
            <person name="Xu Y."/>
            <person name="Cyster J.G."/>
        </authorList>
    </citation>
    <scope>FUNCTION</scope>
</reference>
<reference key="9">
    <citation type="journal article" date="2011" name="J. Immunol.">
        <title>EBI2 operates independently of but in cooperation with CXCR5 and CCR7 to direct B cell migration and organization in follicles and the germinal center.</title>
        <authorList>
            <person name="Gatto D."/>
            <person name="Wood K."/>
            <person name="Brink R."/>
        </authorList>
    </citation>
    <scope>FUNCTION</scope>
</reference>
<reference key="10">
    <citation type="journal article" date="2011" name="Nature">
        <title>Oxysterols direct B-cell migration through EBI2.</title>
        <authorList>
            <person name="Liu C."/>
            <person name="Yang X.V."/>
            <person name="Wu J."/>
            <person name="Kuei C."/>
            <person name="Mani N.S."/>
            <person name="Zhang L."/>
            <person name="Yu J."/>
            <person name="Sutton S.W."/>
            <person name="Qin N."/>
            <person name="Banie H."/>
            <person name="Karlsson L."/>
            <person name="Sun S."/>
            <person name="Lovenberg T.W."/>
        </authorList>
    </citation>
    <scope>IDENTIFICATION OF OXYSTEROLS AS ENDOGENOUS LIGANDS</scope>
</reference>
<reference key="11">
    <citation type="journal article" date="2011" name="Nature">
        <title>Oxysterols direct immune cell migration via EBI2.</title>
        <authorList>
            <person name="Hannedouche S."/>
            <person name="Zhang J."/>
            <person name="Yi T."/>
            <person name="Shen W."/>
            <person name="Nguyen D."/>
            <person name="Pereira J.P."/>
            <person name="Guerini D."/>
            <person name="Baumgarten B.U."/>
            <person name="Roggo S."/>
            <person name="Wen B."/>
            <person name="Knochenmuss R."/>
            <person name="Noel S."/>
            <person name="Gessier F."/>
            <person name="Kelly L.M."/>
            <person name="Vanek M."/>
            <person name="Laurent S."/>
            <person name="Preuss I."/>
            <person name="Miault C."/>
            <person name="Christen I."/>
            <person name="Karuna R."/>
            <person name="Li W."/>
            <person name="Koo D.I."/>
            <person name="Suply T."/>
            <person name="Schmedt C."/>
            <person name="Peters E.C."/>
            <person name="Falchetto R."/>
            <person name="Katopodis A."/>
            <person name="Spanka C."/>
            <person name="Roy M.O."/>
            <person name="Detheux M."/>
            <person name="Chen Y.A."/>
            <person name="Schultz P.G."/>
            <person name="Cho C.Y."/>
            <person name="Seuwen K."/>
            <person name="Cyster J.G."/>
            <person name="Sailer A.W."/>
        </authorList>
    </citation>
    <scope>IDENTIFICATION OF OXYSTEROLS AS ENDOGENOUS LIGANDS</scope>
</reference>
<reference key="12">
    <citation type="journal article" date="2012" name="FASEB J.">
        <title>EBI2 regulates CXCL13-mediated responses by heterodimerization with CXCR5.</title>
        <authorList>
            <person name="Barroso R."/>
            <person name="Martinez Munoz L."/>
            <person name="Barrondo S."/>
            <person name="Vega B."/>
            <person name="Holgado B.L."/>
            <person name="Lucas P."/>
            <person name="Baillo A."/>
            <person name="Salles J."/>
            <person name="Rodriguez-Frade J.M."/>
            <person name="Mellado M."/>
        </authorList>
    </citation>
    <scope>FUNCTION</scope>
</reference>
<reference key="13">
    <citation type="journal article" date="2013" name="Elife">
        <title>EBI2-mediated bridging channel positioning supports splenic dendritic cell homeostasis and particulate antigen capture.</title>
        <authorList>
            <person name="Yi T."/>
            <person name="Cyster J.G."/>
        </authorList>
    </citation>
    <scope>FUNCTION</scope>
    <scope>TISSUE SPECIFICITY</scope>
    <scope>DISRUPTION PHENOTYPE</scope>
</reference>
<reference key="14">
    <citation type="journal article" date="2013" name="Nat. Immunol.">
        <title>The chemotactic receptor EBI2 regulates the homeostasis, localization and immunological function of splenic dendritic cells.</title>
        <authorList>
            <person name="Gatto D."/>
            <person name="Wood K."/>
            <person name="Caminschi I."/>
            <person name="Murphy-Durland D."/>
            <person name="Schofield P."/>
            <person name="Christ D."/>
            <person name="Karupiah G."/>
            <person name="Brink R."/>
        </authorList>
    </citation>
    <scope>FUNCTION</scope>
    <scope>TISSUE SPECIFICITY</scope>
    <scope>DISRUPTION PHENOTYPE</scope>
</reference>
<reference key="15">
    <citation type="journal article" date="2014" name="Cell Rep.">
        <title>The BCL6 RD2 domain governs commitment of activated B cells to form germinal centers.</title>
        <authorList>
            <person name="Huang C."/>
            <person name="Gonzalez D.G."/>
            <person name="Cote C.M."/>
            <person name="Jiang Y."/>
            <person name="Hatzi K."/>
            <person name="Teater M."/>
            <person name="Dai K."/>
            <person name="Hla T."/>
            <person name="Haberman A.M."/>
            <person name="Melnick A."/>
        </authorList>
    </citation>
    <scope>INDUCTION</scope>
</reference>
<reference key="16">
    <citation type="journal article" date="2015" name="Glia">
        <title>EBI2 regulates intracellular signaling and migration in human astrocyte.</title>
        <authorList>
            <person name="Rutkowska A."/>
            <person name="Preuss I."/>
            <person name="Gessier F."/>
            <person name="Sailer A.W."/>
            <person name="Dev K.K."/>
        </authorList>
    </citation>
    <scope>FUNCTION</scope>
    <scope>TISSUE SPECIFICITY</scope>
</reference>
<reference key="17">
    <citation type="journal article" date="2015" name="J. Exp. Med.">
        <title>Oxysterols and EBI2 promote osteoclast precursor migration to bone surfaces and regulate bone mass homeostasis.</title>
        <authorList>
            <person name="Nevius E."/>
            <person name="Pinho F."/>
            <person name="Dhodapkar M."/>
            <person name="Jin H."/>
            <person name="Nadrah K."/>
            <person name="Horowitz M.C."/>
            <person name="Kikuta J."/>
            <person name="Ishii M."/>
            <person name="Pereira J.P."/>
        </authorList>
    </citation>
    <scope>FUNCTION</scope>
    <scope>TISSUE SPECIFICITY</scope>
</reference>
<reference key="18">
    <citation type="journal article" date="2016" name="Nature">
        <title>EBI2 augments Tfh cell fate by promoting interaction with IL-2-quenching dendritic cells.</title>
        <authorList>
            <person name="Li J."/>
            <person name="Lu E."/>
            <person name="Yi T."/>
            <person name="Cyster J.G."/>
        </authorList>
    </citation>
    <scope>FUNCTION</scope>
    <scope>DISRUPTION PHENOTYPE</scope>
</reference>
<reference key="19">
    <citation type="journal article" date="2016" name="Sci. Rep.">
        <title>The EBI2 signalling pathway plays a role in cellular crosstalk between astrocytes and macrophages.</title>
        <authorList>
            <person name="Rutkowska A."/>
            <person name="O'Sullivan S.A."/>
            <person name="Christen I."/>
            <person name="Zhang J."/>
            <person name="Sailer A.W."/>
            <person name="Dev K.K."/>
        </authorList>
    </citation>
    <scope>FUNCTION</scope>
    <scope>INDUCTION</scope>
</reference>
<organism>
    <name type="scientific">Mus musculus</name>
    <name type="common">Mouse</name>
    <dbReference type="NCBI Taxonomy" id="10090"/>
    <lineage>
        <taxon>Eukaryota</taxon>
        <taxon>Metazoa</taxon>
        <taxon>Chordata</taxon>
        <taxon>Craniata</taxon>
        <taxon>Vertebrata</taxon>
        <taxon>Euteleostomi</taxon>
        <taxon>Mammalia</taxon>
        <taxon>Eutheria</taxon>
        <taxon>Euarchontoglires</taxon>
        <taxon>Glires</taxon>
        <taxon>Rodentia</taxon>
        <taxon>Myomorpha</taxon>
        <taxon>Muroidea</taxon>
        <taxon>Muridae</taxon>
        <taxon>Murinae</taxon>
        <taxon>Mus</taxon>
        <taxon>Mus</taxon>
    </lineage>
</organism>
<comment type="function">
    <text evidence="2 6 7 8 9 10 11 12 13 14 16 17 18 19">G-protein coupled receptor expressed in lymphocytes that acts as a chemotactic receptor for B-cells, T-cells, splenic dendritic cells, monocytes/macrophages and astrocytes (PubMed:19597478, PubMed:19615922, PubMed:21796211, PubMed:21796212, PubMed:21844396, PubMed:27147029). Receptor for oxysterol 7-alpha,25-dihydroxycholesterol (7-alpha,25-OHC) and other related oxysterols (PubMed:21796211, PubMed:21796212). Mediates cell positioning and movement of a number of cells by binding the 7-alpha,25-OHC ligand that forms a chemotactic gradient (PubMed:21796211, PubMed:21796212, PubMed:27147029). Binding of 7-alpha,25-OHC mediates the correct localization of B-cells during humoral immune responses (PubMed:21796211, PubMed:21796212). Collaborates with CXCR5 to mediate B-cell migration; probably by forming a heterodimer with CXCR5 that affects the interaction between of CXCL13 and CXCR5 (PubMed:21948984, PubMed:22913878). Guides B-cell movement along the B-cell zone-T-cell zone boundary and later to interfollicular and outer follicular regions (PubMed:19597478, PubMed:19615922, PubMed:21844396). Its specific expression during B-cell maturation helps position B-cells appropriately for mounting T-dependent antibody responses (PubMed:19615922). Also acts as a chemotactic receptor for some T-cells upon binding to 7-alpha,25-OHC ligand (PubMed:27147029). Promotes follicular helper T (Tfh) cells differentiation by positioning activated T-cells at the follicle-T-zone interface, promoting contact of newly activated CD4 T-cells with activated dendritic cells and exposing them to Tfh-cell-promoting inducible costimulator (ICOS) ligand (PubMed:27147029). Expression in splenic dendritic cells is required for their homeostasis, localization and ability to induce B- and T-cell responses: GPR183 acts as a chemotactic receptor in dendritic cells that mediates the accumulation of CD4(+) dendritic cells in bridging channels (PubMed:23502855, PubMed:23682316). Regulates migration of astrocytes and is involved in communication between astrocytes and macrophages (PubMed:25297897, PubMed:27166278). Promotes osteoclast precursor migration to bone surfaces (PubMed:26438360). Signals constitutively through G(i)-alpha, but not G(s)-alpha or G(q)-alpha (By similarity). Signals constitutively also via MAPK1/3 (ERK1/2) (By similarity).</text>
</comment>
<comment type="subunit">
    <text evidence="2">Homodimer and heterodimer. Heterodimerizes with CXCR5; leading to modulate the interaction between of CXCL13 and CXCR5.</text>
</comment>
<comment type="subcellular location">
    <subcellularLocation>
        <location evidence="2">Cell membrane</location>
        <topology evidence="3">Multi-pass membrane protein</topology>
    </subcellularLocation>
</comment>
<comment type="tissue specificity">
    <text evidence="6 13 14 16 17">Expressed in mature B-cells and increases in expression early after activation, before being down-regulated in germinal center B-cells (PubMed:19597478). Expressed in astrocytes (PubMed:25297897). Specifically expressed in CD4(+) dendritic cells but not in CD8(+) dendritic cells (PubMed:23502855, PubMed:23682316). Expressed in monocyte/osteoclasts precursors and mature osteoclasts (PubMed:26438360).</text>
</comment>
<comment type="induction">
    <text evidence="6 15 19">Up-regulated during B-cell maturation in the bone marrow, and is expressed in mature recirculating B-cells in bone marrow, spleen and lymph nodes (PubMed:19597478). Up-regulated in B-cells after BCR and CD40 engagement (PubMed:19597478). Down-regulated by lipopolysaccharide (LPS) in astrocytes (PubMed:27166278). Expression is directly down-regulated by BCL6 (PubMed:25176650).</text>
</comment>
<comment type="disruption phenotype">
    <text evidence="6 7 13 18">Mice display a reduction in the early antibody response to a T-dependent antigen (PubMed:19597478). B-cells fail to move to the outer follicle at day 2 of activation, and instead are found in the follicle center (PubMed:19615922). Mice have normal numbers of B- and T-cells and organized follicles and T-cell compartments are present (PubMed:19615922). Mice show a decreased number of splenic CD4(+) dendritic cells and defective priming of T- and B-cell response (PubMed:23502855, PubMed:23682316). Reduced follicular helper T (Tfh) cells (PubMed:27147029). T-cells fail to accumulate in the outer T zone at either time point and instead remain dispersed throughout the T zone (PubMed:27147029).</text>
</comment>
<comment type="miscellaneous">
    <text evidence="21">GSK682753A (8-[(2E)-3-(4-chlorophenyl)prop-2-enoyl]-3-[(3,4-dichlorophenyl)methyl]-1-oxa-3,8-diazaspiro[4.5]decan-2-one), an inverse agonist, selectively inhibits the constitutive activity of GPR183 with high potency and efficacy.</text>
</comment>
<comment type="similarity">
    <text evidence="4">Belongs to the G-protein coupled receptor 1 family.</text>
</comment>
<name>GP183_MOUSE</name>
<protein>
    <recommendedName>
        <fullName evidence="20">G-protein coupled receptor 183</fullName>
    </recommendedName>
    <alternativeName>
        <fullName evidence="2">Epstein-Barr virus-induced G-protein coupled receptor 2 homolog</fullName>
        <shortName evidence="2">EBI2</shortName>
        <shortName evidence="2">EBV-induced G-protein coupled receptor 2 homolog</shortName>
    </alternativeName>
</protein>
<accession>Q3U6B2</accession>
<accession>Q3U1F6</accession>
<accession>Q7TMV7</accession>
<accession>Q80T40</accession>
<proteinExistence type="evidence at protein level"/>
<dbReference type="EMBL" id="AK138693">
    <property type="protein sequence ID" value="BAE23750.1"/>
    <property type="molecule type" value="mRNA"/>
</dbReference>
<dbReference type="EMBL" id="AK153216">
    <property type="protein sequence ID" value="BAE31813.1"/>
    <property type="molecule type" value="mRNA"/>
</dbReference>
<dbReference type="EMBL" id="AK156005">
    <property type="protein sequence ID" value="BAE33542.1"/>
    <property type="molecule type" value="mRNA"/>
</dbReference>
<dbReference type="EMBL" id="BC052868">
    <property type="protein sequence ID" value="AAH52868.1"/>
    <property type="molecule type" value="mRNA"/>
</dbReference>
<dbReference type="EMBL" id="AY255606">
    <property type="protein sequence ID" value="AAO85118.1"/>
    <property type="molecule type" value="mRNA"/>
</dbReference>
<dbReference type="CCDS" id="CCDS27343.1"/>
<dbReference type="RefSeq" id="NP_898852.2">
    <property type="nucleotide sequence ID" value="NM_183031.2"/>
</dbReference>
<dbReference type="RefSeq" id="XP_036014569.1">
    <property type="nucleotide sequence ID" value="XM_036158676.1"/>
</dbReference>
<dbReference type="SMR" id="Q3U6B2"/>
<dbReference type="BioGRID" id="236467">
    <property type="interactions" value="1"/>
</dbReference>
<dbReference type="FunCoup" id="Q3U6B2">
    <property type="interactions" value="996"/>
</dbReference>
<dbReference type="STRING" id="10090.ENSMUSP00000052404"/>
<dbReference type="BindingDB" id="Q3U6B2"/>
<dbReference type="ChEMBL" id="CHEMBL3259471"/>
<dbReference type="GuidetoPHARMACOLOGY" id="81"/>
<dbReference type="GlyCosmos" id="Q3U6B2">
    <property type="glycosylation" value="1 site, No reported glycans"/>
</dbReference>
<dbReference type="GlyGen" id="Q3U6B2">
    <property type="glycosylation" value="1 site"/>
</dbReference>
<dbReference type="iPTMnet" id="Q3U6B2"/>
<dbReference type="PhosphoSitePlus" id="Q3U6B2"/>
<dbReference type="SwissPalm" id="Q3U6B2"/>
<dbReference type="jPOST" id="Q3U6B2"/>
<dbReference type="PaxDb" id="10090-ENSMUSP00000052404"/>
<dbReference type="ProteomicsDB" id="267752"/>
<dbReference type="Antibodypedia" id="10905">
    <property type="antibodies" value="230 antibodies from 33 providers"/>
</dbReference>
<dbReference type="DNASU" id="321019"/>
<dbReference type="Ensembl" id="ENSMUST00000049872.9">
    <property type="protein sequence ID" value="ENSMUSP00000052404.8"/>
    <property type="gene ID" value="ENSMUSG00000051212.9"/>
</dbReference>
<dbReference type="GeneID" id="321019"/>
<dbReference type="KEGG" id="mmu:321019"/>
<dbReference type="UCSC" id="uc007vaq.1">
    <property type="organism name" value="mouse"/>
</dbReference>
<dbReference type="AGR" id="MGI:2442034"/>
<dbReference type="CTD" id="1880"/>
<dbReference type="MGI" id="MGI:2442034">
    <property type="gene designation" value="Gpr183"/>
</dbReference>
<dbReference type="VEuPathDB" id="HostDB:ENSMUSG00000051212"/>
<dbReference type="eggNOG" id="ENOG502QWD9">
    <property type="taxonomic scope" value="Eukaryota"/>
</dbReference>
<dbReference type="GeneTree" id="ENSGT01030000234518"/>
<dbReference type="HOGENOM" id="CLU_009579_8_2_1"/>
<dbReference type="InParanoid" id="Q3U6B2"/>
<dbReference type="OMA" id="NERTTCM"/>
<dbReference type="OrthoDB" id="10021141at2759"/>
<dbReference type="PhylomeDB" id="Q3U6B2"/>
<dbReference type="TreeFam" id="TF350009"/>
<dbReference type="Reactome" id="R-MMU-373076">
    <property type="pathway name" value="Class A/1 (Rhodopsin-like receptors)"/>
</dbReference>
<dbReference type="Reactome" id="R-MMU-418594">
    <property type="pathway name" value="G alpha (i) signalling events"/>
</dbReference>
<dbReference type="BioGRID-ORCS" id="321019">
    <property type="hits" value="2 hits in 75 CRISPR screens"/>
</dbReference>
<dbReference type="ChiTaRS" id="Gpr183">
    <property type="organism name" value="mouse"/>
</dbReference>
<dbReference type="PRO" id="PR:Q3U6B2"/>
<dbReference type="Proteomes" id="UP000000589">
    <property type="component" value="Chromosome 14"/>
</dbReference>
<dbReference type="RNAct" id="Q3U6B2">
    <property type="molecule type" value="protein"/>
</dbReference>
<dbReference type="Bgee" id="ENSMUSG00000051212">
    <property type="expression patterns" value="Expressed in mesenteric lymph node and 127 other cell types or tissues"/>
</dbReference>
<dbReference type="ExpressionAtlas" id="Q3U6B2">
    <property type="expression patterns" value="baseline and differential"/>
</dbReference>
<dbReference type="GO" id="GO:0005654">
    <property type="term" value="C:nucleoplasm"/>
    <property type="evidence" value="ECO:0007669"/>
    <property type="project" value="Ensembl"/>
</dbReference>
<dbReference type="GO" id="GO:0005886">
    <property type="term" value="C:plasma membrane"/>
    <property type="evidence" value="ECO:0000250"/>
    <property type="project" value="UniProtKB"/>
</dbReference>
<dbReference type="GO" id="GO:0004930">
    <property type="term" value="F:G protein-coupled receptor activity"/>
    <property type="evidence" value="ECO:0000250"/>
    <property type="project" value="UniProtKB"/>
</dbReference>
<dbReference type="GO" id="GO:0008142">
    <property type="term" value="F:oxysterol binding"/>
    <property type="evidence" value="ECO:0000314"/>
    <property type="project" value="UniProtKB"/>
</dbReference>
<dbReference type="GO" id="GO:0002250">
    <property type="term" value="P:adaptive immune response"/>
    <property type="evidence" value="ECO:0000315"/>
    <property type="project" value="UniProtKB"/>
</dbReference>
<dbReference type="GO" id="GO:0060326">
    <property type="term" value="P:cell chemotaxis"/>
    <property type="evidence" value="ECO:0000315"/>
    <property type="project" value="UniProtKB"/>
</dbReference>
<dbReference type="GO" id="GO:0002407">
    <property type="term" value="P:dendritic cell chemotaxis"/>
    <property type="evidence" value="ECO:0000315"/>
    <property type="project" value="UniProtKB"/>
</dbReference>
<dbReference type="GO" id="GO:0036145">
    <property type="term" value="P:dendritic cell homeostasis"/>
    <property type="evidence" value="ECO:0000315"/>
    <property type="project" value="UniProtKB"/>
</dbReference>
<dbReference type="GO" id="GO:0007186">
    <property type="term" value="P:G protein-coupled receptor signaling pathway"/>
    <property type="evidence" value="ECO:0000250"/>
    <property type="project" value="UniProtKB"/>
</dbReference>
<dbReference type="GO" id="GO:0006959">
    <property type="term" value="P:humoral immune response"/>
    <property type="evidence" value="ECO:0000315"/>
    <property type="project" value="UniProtKB"/>
</dbReference>
<dbReference type="GO" id="GO:0030595">
    <property type="term" value="P:leukocyte chemotaxis"/>
    <property type="evidence" value="ECO:0000314"/>
    <property type="project" value="MGI"/>
</dbReference>
<dbReference type="GO" id="GO:0002313">
    <property type="term" value="P:mature B cell differentiation involved in immune response"/>
    <property type="evidence" value="ECO:0000315"/>
    <property type="project" value="UniProtKB"/>
</dbReference>
<dbReference type="GO" id="GO:0030316">
    <property type="term" value="P:osteoclast differentiation"/>
    <property type="evidence" value="ECO:0000315"/>
    <property type="project" value="UniProtKB"/>
</dbReference>
<dbReference type="GO" id="GO:0030890">
    <property type="term" value="P:positive regulation of B cell proliferation"/>
    <property type="evidence" value="ECO:0000314"/>
    <property type="project" value="UniProtKB"/>
</dbReference>
<dbReference type="GO" id="GO:0070374">
    <property type="term" value="P:positive regulation of ERK1 and ERK2 cascade"/>
    <property type="evidence" value="ECO:0000250"/>
    <property type="project" value="UniProtKB"/>
</dbReference>
<dbReference type="GO" id="GO:2000458">
    <property type="term" value="P:regulation of astrocyte chemotaxis"/>
    <property type="evidence" value="ECO:0000250"/>
    <property type="project" value="UniProtKB"/>
</dbReference>
<dbReference type="GO" id="GO:0010818">
    <property type="term" value="P:T cell chemotaxis"/>
    <property type="evidence" value="ECO:0000315"/>
    <property type="project" value="UniProtKB"/>
</dbReference>
<dbReference type="GO" id="GO:0061470">
    <property type="term" value="P:T follicular helper cell differentiation"/>
    <property type="evidence" value="ECO:0000315"/>
    <property type="project" value="UniProtKB"/>
</dbReference>
<dbReference type="CDD" id="cd15159">
    <property type="entry name" value="7tmA_EBI2"/>
    <property type="match status" value="1"/>
</dbReference>
<dbReference type="FunFam" id="1.20.1070.10:FF:000017">
    <property type="entry name" value="lysophosphatidic acid receptor 4"/>
    <property type="match status" value="1"/>
</dbReference>
<dbReference type="Gene3D" id="1.20.1070.10">
    <property type="entry name" value="Rhodopsin 7-helix transmembrane proteins"/>
    <property type="match status" value="1"/>
</dbReference>
<dbReference type="InterPro" id="IPR047160">
    <property type="entry name" value="GP183-like"/>
</dbReference>
<dbReference type="InterPro" id="IPR000276">
    <property type="entry name" value="GPCR_Rhodpsn"/>
</dbReference>
<dbReference type="InterPro" id="IPR017452">
    <property type="entry name" value="GPCR_Rhodpsn_7TM"/>
</dbReference>
<dbReference type="PANTHER" id="PTHR24237">
    <property type="entry name" value="G-PROTEIN COUPLED RECEPTOR"/>
    <property type="match status" value="1"/>
</dbReference>
<dbReference type="PANTHER" id="PTHR24237:SF7">
    <property type="entry name" value="G-PROTEIN COUPLED RECEPTOR 183"/>
    <property type="match status" value="1"/>
</dbReference>
<dbReference type="Pfam" id="PF00001">
    <property type="entry name" value="7tm_1"/>
    <property type="match status" value="1"/>
</dbReference>
<dbReference type="PRINTS" id="PR00237">
    <property type="entry name" value="GPCRRHODOPSN"/>
</dbReference>
<dbReference type="PRINTS" id="PR01157">
    <property type="entry name" value="P2YPURNOCPTR"/>
</dbReference>
<dbReference type="SMART" id="SM01381">
    <property type="entry name" value="7TM_GPCR_Srsx"/>
    <property type="match status" value="1"/>
</dbReference>
<dbReference type="SUPFAM" id="SSF81321">
    <property type="entry name" value="Family A G protein-coupled receptor-like"/>
    <property type="match status" value="1"/>
</dbReference>
<dbReference type="PROSITE" id="PS00237">
    <property type="entry name" value="G_PROTEIN_RECEP_F1_1"/>
    <property type="match status" value="1"/>
</dbReference>
<dbReference type="PROSITE" id="PS50262">
    <property type="entry name" value="G_PROTEIN_RECEP_F1_2"/>
    <property type="match status" value="1"/>
</dbReference>